<name>VRAR_STAAM</name>
<keyword id="KW-0002">3D-structure</keyword>
<keyword id="KW-0010">Activator</keyword>
<keyword id="KW-0046">Antibiotic resistance</keyword>
<keyword id="KW-0963">Cytoplasm</keyword>
<keyword id="KW-0238">DNA-binding</keyword>
<keyword id="KW-0597">Phosphoprotein</keyword>
<keyword id="KW-0804">Transcription</keyword>
<keyword id="KW-0805">Transcription regulation</keyword>
<keyword id="KW-0902">Two-component regulatory system</keyword>
<accession>Q7A2Q1</accession>
<reference key="1">
    <citation type="journal article" date="2001" name="Lancet">
        <title>Whole genome sequencing of meticillin-resistant Staphylococcus aureus.</title>
        <authorList>
            <person name="Kuroda M."/>
            <person name="Ohta T."/>
            <person name="Uchiyama I."/>
            <person name="Baba T."/>
            <person name="Yuzawa H."/>
            <person name="Kobayashi I."/>
            <person name="Cui L."/>
            <person name="Oguchi A."/>
            <person name="Aoki K."/>
            <person name="Nagai Y."/>
            <person name="Lian J.-Q."/>
            <person name="Ito T."/>
            <person name="Kanamori M."/>
            <person name="Matsumaru H."/>
            <person name="Maruyama A."/>
            <person name="Murakami H."/>
            <person name="Hosoyama A."/>
            <person name="Mizutani-Ui Y."/>
            <person name="Takahashi N.K."/>
            <person name="Sawano T."/>
            <person name="Inoue R."/>
            <person name="Kaito C."/>
            <person name="Sekimizu K."/>
            <person name="Hirakawa H."/>
            <person name="Kuhara S."/>
            <person name="Goto S."/>
            <person name="Yabuzaki J."/>
            <person name="Kanehisa M."/>
            <person name="Yamashita A."/>
            <person name="Oshima K."/>
            <person name="Furuya K."/>
            <person name="Yoshino C."/>
            <person name="Shiba T."/>
            <person name="Hattori M."/>
            <person name="Ogasawara N."/>
            <person name="Hayashi H."/>
            <person name="Hiramatsu K."/>
        </authorList>
    </citation>
    <scope>NUCLEOTIDE SEQUENCE [LARGE SCALE GENOMIC DNA]</scope>
    <source>
        <strain>Mu50 / ATCC 700699</strain>
    </source>
</reference>
<reference key="2">
    <citation type="journal article" date="2000" name="Biochem. Biophys. Res. Commun.">
        <title>Identification of the up- and down-regulated genes in vancomycin-resistant Staphylococcus aureus strains Mu3 and Mu50 by cDNA differential hybridization method.</title>
        <authorList>
            <person name="Kuroda M."/>
            <person name="Kuwahara-Arai K."/>
            <person name="Hiramatsu K."/>
        </authorList>
    </citation>
    <scope>FUNCTION</scope>
</reference>
<reference key="3">
    <citation type="journal article" date="2008" name="J. Biol. Chem.">
        <title>A close-up view of the VraSR two-component system. A mediator of Staphylococcus aureus response to cell wall damage.</title>
        <authorList>
            <person name="Belcheva A."/>
            <person name="Golemi-Kotra D."/>
        </authorList>
    </citation>
    <scope>FUNCTION</scope>
    <scope>PHOSPHORYLATION AT ASP-55</scope>
    <scope>SUBUNIT</scope>
    <scope>MUTAGENESIS OF ASP-55</scope>
    <source>
        <strain>Mu50 / ATCC 700699</strain>
    </source>
</reference>
<reference key="4">
    <citation type="journal article" date="2013" name="Proc. Natl. Acad. Sci. U.S.A.">
        <title>Phosphorylation-dependent conformational changes and domain rearrangements in Staphylococcus aureus VraR activation.</title>
        <authorList>
            <person name="Leonard P.G."/>
            <person name="Golemi-Kotra D."/>
            <person name="Stock A.M."/>
        </authorList>
    </citation>
    <scope>X-RAY CRYSTALLOGRAPHY (2.03 ANGSTROMS) OF 2-209</scope>
    <scope>PHOSPHORYLATION</scope>
    <scope>FUNCTION</scope>
    <scope>SUBUNIT</scope>
</reference>
<reference key="5">
    <citation type="journal article" date="2008" name="Biochemistry">
        <title>The NMR structure of the Staphylococcus aureus response regulator VraR DNA binding domain reveals a dynamic relationship between it and its associated receiver domain.</title>
        <authorList>
            <person name="Donaldson L.W."/>
        </authorList>
    </citation>
    <scope>STRUCTURE BY NMR OF 138-209</scope>
    <scope>SUBUNIT</scope>
</reference>
<evidence type="ECO:0000250" key="1">
    <source>
        <dbReference type="UniProtKB" id="P0C0Z1"/>
    </source>
</evidence>
<evidence type="ECO:0000255" key="2">
    <source>
        <dbReference type="PROSITE-ProRule" id="PRU00169"/>
    </source>
</evidence>
<evidence type="ECO:0000255" key="3">
    <source>
        <dbReference type="PROSITE-ProRule" id="PRU00411"/>
    </source>
</evidence>
<evidence type="ECO:0000269" key="4">
    <source>
    </source>
</evidence>
<evidence type="ECO:0000269" key="5">
    <source>
    </source>
</evidence>
<evidence type="ECO:0000269" key="6">
    <source>
    </source>
</evidence>
<evidence type="ECO:0000269" key="7">
    <source>
    </source>
</evidence>
<evidence type="ECO:0000305" key="8"/>
<evidence type="ECO:0007829" key="9">
    <source>
        <dbReference type="PDB" id="4GVP"/>
    </source>
</evidence>
<organism>
    <name type="scientific">Staphylococcus aureus (strain Mu50 / ATCC 700699)</name>
    <dbReference type="NCBI Taxonomy" id="158878"/>
    <lineage>
        <taxon>Bacteria</taxon>
        <taxon>Bacillati</taxon>
        <taxon>Bacillota</taxon>
        <taxon>Bacilli</taxon>
        <taxon>Bacillales</taxon>
        <taxon>Staphylococcaceae</taxon>
        <taxon>Staphylococcus</taxon>
    </lineage>
</organism>
<feature type="chain" id="PRO_0000081270" description="Response regulator protein VraR">
    <location>
        <begin position="1"/>
        <end position="209"/>
    </location>
</feature>
<feature type="domain" description="Response regulatory" evidence="2">
    <location>
        <begin position="4"/>
        <end position="120"/>
    </location>
</feature>
<feature type="domain" description="HTH luxR-type" evidence="3">
    <location>
        <begin position="141"/>
        <end position="206"/>
    </location>
</feature>
<feature type="DNA-binding region" description="H-T-H motif" evidence="3">
    <location>
        <begin position="165"/>
        <end position="184"/>
    </location>
</feature>
<feature type="modified residue" description="4-aspartylphosphate" evidence="2 6">
    <location>
        <position position="55"/>
    </location>
</feature>
<feature type="mutagenesis site" description="Complete loss of phosphorylation." evidence="6">
    <original>D</original>
    <variation>A</variation>
    <location>
        <position position="55"/>
    </location>
</feature>
<feature type="strand" evidence="9">
    <location>
        <begin position="3"/>
        <end position="8"/>
    </location>
</feature>
<feature type="helix" evidence="9">
    <location>
        <begin position="12"/>
        <end position="24"/>
    </location>
</feature>
<feature type="strand" evidence="9">
    <location>
        <begin position="28"/>
        <end position="36"/>
    </location>
</feature>
<feature type="helix" evidence="9">
    <location>
        <begin position="37"/>
        <end position="47"/>
    </location>
</feature>
<feature type="strand" evidence="9">
    <location>
        <begin position="50"/>
        <end position="57"/>
    </location>
</feature>
<feature type="strand" evidence="9">
    <location>
        <begin position="59"/>
        <end position="62"/>
    </location>
</feature>
<feature type="helix" evidence="9">
    <location>
        <begin position="63"/>
        <end position="71"/>
    </location>
</feature>
<feature type="strand" evidence="9">
    <location>
        <begin position="77"/>
        <end position="84"/>
    </location>
</feature>
<feature type="helix" evidence="9">
    <location>
        <begin position="88"/>
        <end position="96"/>
    </location>
</feature>
<feature type="strand" evidence="9">
    <location>
        <begin position="101"/>
        <end position="104"/>
    </location>
</feature>
<feature type="helix" evidence="9">
    <location>
        <begin position="109"/>
        <end position="120"/>
    </location>
</feature>
<feature type="helix" evidence="9">
    <location>
        <begin position="128"/>
        <end position="130"/>
    </location>
</feature>
<feature type="helix" evidence="9">
    <location>
        <begin position="131"/>
        <end position="143"/>
    </location>
</feature>
<feature type="helix" evidence="9">
    <location>
        <begin position="144"/>
        <end position="147"/>
    </location>
</feature>
<feature type="helix" evidence="9">
    <location>
        <begin position="150"/>
        <end position="160"/>
    </location>
</feature>
<feature type="helix" evidence="9">
    <location>
        <begin position="165"/>
        <end position="172"/>
    </location>
</feature>
<feature type="helix" evidence="9">
    <location>
        <begin position="176"/>
        <end position="189"/>
    </location>
</feature>
<feature type="helix" evidence="9">
    <location>
        <begin position="195"/>
        <end position="204"/>
    </location>
</feature>
<sequence length="209" mass="23559">MTIKVLFVDDHEMVRIGISSYLSTQSDIEVVGEGASGKEAIAKAHELKPDLILMDLLMEDMDGVEATTQIKKDLPQIKVLMLTSFIEDKEVYRALDAGVDSYILKTTSAKDIADAVRKTSRGESVFEPEVLVKMRNRMKKRAELYEMLTEREMEILLLIAKGYSNQEIASASHITIKTVKTHVSNILSKLEVQDRTQAVIYAFQHNLIQ</sequence>
<proteinExistence type="evidence at protein level"/>
<protein>
    <recommendedName>
        <fullName>Response regulator protein VraR</fullName>
    </recommendedName>
</protein>
<dbReference type="EMBL" id="BA000017">
    <property type="protein sequence ID" value="BAB58046.1"/>
    <property type="molecule type" value="Genomic_DNA"/>
</dbReference>
<dbReference type="RefSeq" id="WP_000153535.1">
    <property type="nucleotide sequence ID" value="NC_002758.2"/>
</dbReference>
<dbReference type="PDB" id="2RNJ">
    <property type="method" value="NMR"/>
    <property type="chains" value="A=138-209"/>
</dbReference>
<dbReference type="PDB" id="4GVP">
    <property type="method" value="X-ray"/>
    <property type="resolution" value="2.03 A"/>
    <property type="chains" value="A/B/C/D=2-209"/>
</dbReference>
<dbReference type="PDB" id="4IF4">
    <property type="method" value="X-ray"/>
    <property type="resolution" value="2.35 A"/>
    <property type="chains" value="A/B/C/D=2-209"/>
</dbReference>
<dbReference type="PDB" id="7VE6">
    <property type="method" value="X-ray"/>
    <property type="resolution" value="2.77 A"/>
    <property type="chains" value="A/B=1-209"/>
</dbReference>
<dbReference type="PDBsum" id="2RNJ"/>
<dbReference type="PDBsum" id="4GVP"/>
<dbReference type="PDBsum" id="4IF4"/>
<dbReference type="PDBsum" id="7VE6"/>
<dbReference type="SMR" id="Q7A2Q1"/>
<dbReference type="KEGG" id="sav:SAV1884"/>
<dbReference type="HOGENOM" id="CLU_000445_90_10_9"/>
<dbReference type="PhylomeDB" id="Q7A2Q1"/>
<dbReference type="EvolutionaryTrace" id="Q7A2Q1"/>
<dbReference type="Proteomes" id="UP000002481">
    <property type="component" value="Chromosome"/>
</dbReference>
<dbReference type="GO" id="GO:0005737">
    <property type="term" value="C:cytoplasm"/>
    <property type="evidence" value="ECO:0007669"/>
    <property type="project" value="UniProtKB-SubCell"/>
</dbReference>
<dbReference type="GO" id="GO:0003677">
    <property type="term" value="F:DNA binding"/>
    <property type="evidence" value="ECO:0007669"/>
    <property type="project" value="UniProtKB-KW"/>
</dbReference>
<dbReference type="GO" id="GO:0000160">
    <property type="term" value="P:phosphorelay signal transduction system"/>
    <property type="evidence" value="ECO:0007669"/>
    <property type="project" value="UniProtKB-KW"/>
</dbReference>
<dbReference type="GO" id="GO:0006355">
    <property type="term" value="P:regulation of DNA-templated transcription"/>
    <property type="evidence" value="ECO:0007669"/>
    <property type="project" value="InterPro"/>
</dbReference>
<dbReference type="GO" id="GO:0046677">
    <property type="term" value="P:response to antibiotic"/>
    <property type="evidence" value="ECO:0007669"/>
    <property type="project" value="UniProtKB-KW"/>
</dbReference>
<dbReference type="CDD" id="cd06170">
    <property type="entry name" value="LuxR_C_like"/>
    <property type="match status" value="1"/>
</dbReference>
<dbReference type="CDD" id="cd17535">
    <property type="entry name" value="REC_NarL-like"/>
    <property type="match status" value="1"/>
</dbReference>
<dbReference type="Gene3D" id="3.40.50.2300">
    <property type="match status" value="1"/>
</dbReference>
<dbReference type="InterPro" id="IPR011006">
    <property type="entry name" value="CheY-like_superfamily"/>
</dbReference>
<dbReference type="InterPro" id="IPR016032">
    <property type="entry name" value="Sig_transdc_resp-reg_C-effctor"/>
</dbReference>
<dbReference type="InterPro" id="IPR001789">
    <property type="entry name" value="Sig_transdc_resp-reg_receiver"/>
</dbReference>
<dbReference type="InterPro" id="IPR000792">
    <property type="entry name" value="Tscrpt_reg_LuxR_C"/>
</dbReference>
<dbReference type="InterPro" id="IPR039420">
    <property type="entry name" value="WalR-like"/>
</dbReference>
<dbReference type="PANTHER" id="PTHR43214:SF37">
    <property type="entry name" value="TRANSCRIPTIONAL REGULATORY PROTEIN YDFI"/>
    <property type="match status" value="1"/>
</dbReference>
<dbReference type="PANTHER" id="PTHR43214">
    <property type="entry name" value="TWO-COMPONENT RESPONSE REGULATOR"/>
    <property type="match status" value="1"/>
</dbReference>
<dbReference type="Pfam" id="PF00196">
    <property type="entry name" value="GerE"/>
    <property type="match status" value="1"/>
</dbReference>
<dbReference type="Pfam" id="PF00072">
    <property type="entry name" value="Response_reg"/>
    <property type="match status" value="1"/>
</dbReference>
<dbReference type="PRINTS" id="PR00038">
    <property type="entry name" value="HTHLUXR"/>
</dbReference>
<dbReference type="SMART" id="SM00421">
    <property type="entry name" value="HTH_LUXR"/>
    <property type="match status" value="1"/>
</dbReference>
<dbReference type="SMART" id="SM00448">
    <property type="entry name" value="REC"/>
    <property type="match status" value="1"/>
</dbReference>
<dbReference type="SUPFAM" id="SSF46894">
    <property type="entry name" value="C-terminal effector domain of the bipartite response regulators"/>
    <property type="match status" value="1"/>
</dbReference>
<dbReference type="SUPFAM" id="SSF52172">
    <property type="entry name" value="CheY-like"/>
    <property type="match status" value="1"/>
</dbReference>
<dbReference type="PROSITE" id="PS50043">
    <property type="entry name" value="HTH_LUXR_2"/>
    <property type="match status" value="1"/>
</dbReference>
<dbReference type="PROSITE" id="PS50110">
    <property type="entry name" value="RESPONSE_REGULATORY"/>
    <property type="match status" value="1"/>
</dbReference>
<comment type="function">
    <text evidence="1 4 6 7">Member of the two-component regulatory system VraS/VraR involved in the control of the cell wall peptidoglycan biosynthesis. Upon cellular stress, the histidine kinase VraS transfers the phosphoryl group onto VraR (PubMed:18326495). Upon phosphorylation, VraR dimerizes at the N-terminal domain (PubMed:18326495, PubMed:23650349). In turn, phosphorylation-induced dimerization expands and enhances the VraR binding to its own promoter leading to increased expression and subsequent modulation of about 40 genes, which ultimately constitute the S.aureus response to cell wall damage (PubMed:10708580). In addition, inhibits the host autophagic flux and delays the early stage of autophagosome formation, thereby promoting bacterial survival. Facilitates the ability of S.aureus to resist host polymorphonuclear leukocytes-mediated phagocytosis and killing thus contributing to immune evasion (By similarity).</text>
</comment>
<comment type="subunit">
    <text evidence="5 6 7">Homodimer.</text>
</comment>
<comment type="subcellular location">
    <subcellularLocation>
        <location evidence="8">Cytoplasm</location>
    </subcellularLocation>
</comment>
<comment type="PTM">
    <text evidence="6 7">Phosphorylated by VraS. Phosphorylation state of VraR controls dimerization of the protein.</text>
</comment>
<gene>
    <name type="primary">vraR</name>
    <name type="ordered locus">SAV1884</name>
</gene>